<organism>
    <name type="scientific">Shewanella oneidensis (strain ATCC 700550 / JCM 31522 / CIP 106686 / LMG 19005 / NCIMB 14063 / MR-1)</name>
    <dbReference type="NCBI Taxonomy" id="211586"/>
    <lineage>
        <taxon>Bacteria</taxon>
        <taxon>Pseudomonadati</taxon>
        <taxon>Pseudomonadota</taxon>
        <taxon>Gammaproteobacteria</taxon>
        <taxon>Alteromonadales</taxon>
        <taxon>Shewanellaceae</taxon>
        <taxon>Shewanella</taxon>
    </lineage>
</organism>
<keyword id="KW-0456">Lyase</keyword>
<keyword id="KW-0479">Metal-binding</keyword>
<keyword id="KW-1185">Reference proteome</keyword>
<feature type="chain" id="PRO_0000209636" description="Putative 4-hydroxy-4-methyl-2-oxoglutarate aldolase">
    <location>
        <begin position="1"/>
        <end position="164"/>
    </location>
</feature>
<feature type="binding site" evidence="1">
    <location>
        <begin position="75"/>
        <end position="78"/>
    </location>
    <ligand>
        <name>substrate</name>
    </ligand>
</feature>
<feature type="binding site" evidence="1">
    <location>
        <position position="97"/>
    </location>
    <ligand>
        <name>substrate</name>
    </ligand>
</feature>
<feature type="binding site" evidence="1">
    <location>
        <position position="98"/>
    </location>
    <ligand>
        <name>a divalent metal cation</name>
        <dbReference type="ChEBI" id="CHEBI:60240"/>
    </ligand>
</feature>
<protein>
    <recommendedName>
        <fullName>Putative 4-hydroxy-4-methyl-2-oxoglutarate aldolase</fullName>
        <shortName>HMG aldolase</shortName>
        <ecNumber>4.1.3.17</ecNumber>
    </recommendedName>
    <alternativeName>
        <fullName>Oxaloacetate decarboxylase</fullName>
        <shortName>OAA decarboxylase</shortName>
        <ecNumber>4.1.1.112</ecNumber>
    </alternativeName>
    <alternativeName>
        <fullName>Regulator of ribonuclease activity homolog</fullName>
    </alternativeName>
    <alternativeName>
        <fullName>RraA-like protein</fullName>
    </alternativeName>
</protein>
<accession>Q8EE23</accession>
<proteinExistence type="inferred from homology"/>
<dbReference type="EC" id="4.1.3.17"/>
<dbReference type="EC" id="4.1.1.112"/>
<dbReference type="EMBL" id="AE014299">
    <property type="protein sequence ID" value="AAN55597.1"/>
    <property type="molecule type" value="Genomic_DNA"/>
</dbReference>
<dbReference type="RefSeq" id="NP_718153.1">
    <property type="nucleotide sequence ID" value="NC_004347.2"/>
</dbReference>
<dbReference type="RefSeq" id="WP_011072520.1">
    <property type="nucleotide sequence ID" value="NC_004347.2"/>
</dbReference>
<dbReference type="SMR" id="Q8EE23"/>
<dbReference type="STRING" id="211586.SO_2567"/>
<dbReference type="PaxDb" id="211586-SO_2567"/>
<dbReference type="KEGG" id="son:SO_2567"/>
<dbReference type="PATRIC" id="fig|211586.12.peg.2471"/>
<dbReference type="eggNOG" id="COG0684">
    <property type="taxonomic scope" value="Bacteria"/>
</dbReference>
<dbReference type="HOGENOM" id="CLU_072626_4_0_6"/>
<dbReference type="OrthoDB" id="943692at2"/>
<dbReference type="PhylomeDB" id="Q8EE23"/>
<dbReference type="BioCyc" id="SONE211586:G1GMP-2354-MONOMER"/>
<dbReference type="Proteomes" id="UP000008186">
    <property type="component" value="Chromosome"/>
</dbReference>
<dbReference type="GO" id="GO:0047443">
    <property type="term" value="F:4-hydroxy-4-methyl-2-oxoglutarate aldolase activity"/>
    <property type="evidence" value="ECO:0007669"/>
    <property type="project" value="UniProtKB-EC"/>
</dbReference>
<dbReference type="GO" id="GO:0046872">
    <property type="term" value="F:metal ion binding"/>
    <property type="evidence" value="ECO:0007669"/>
    <property type="project" value="UniProtKB-KW"/>
</dbReference>
<dbReference type="GO" id="GO:0008948">
    <property type="term" value="F:oxaloacetate decarboxylase activity"/>
    <property type="evidence" value="ECO:0007669"/>
    <property type="project" value="UniProtKB-EC"/>
</dbReference>
<dbReference type="GO" id="GO:0008428">
    <property type="term" value="F:ribonuclease inhibitor activity"/>
    <property type="evidence" value="ECO:0007669"/>
    <property type="project" value="InterPro"/>
</dbReference>
<dbReference type="GO" id="GO:0051252">
    <property type="term" value="P:regulation of RNA metabolic process"/>
    <property type="evidence" value="ECO:0007669"/>
    <property type="project" value="InterPro"/>
</dbReference>
<dbReference type="CDD" id="cd16841">
    <property type="entry name" value="RraA_family"/>
    <property type="match status" value="1"/>
</dbReference>
<dbReference type="Gene3D" id="3.50.30.40">
    <property type="entry name" value="Ribonuclease E inhibitor RraA/RraA-like"/>
    <property type="match status" value="1"/>
</dbReference>
<dbReference type="InterPro" id="IPR010203">
    <property type="entry name" value="RraA"/>
</dbReference>
<dbReference type="InterPro" id="IPR005493">
    <property type="entry name" value="RraA/RraA-like"/>
</dbReference>
<dbReference type="InterPro" id="IPR036704">
    <property type="entry name" value="RraA/RraA-like_sf"/>
</dbReference>
<dbReference type="NCBIfam" id="TIGR01935">
    <property type="entry name" value="NOT-MenG"/>
    <property type="match status" value="1"/>
</dbReference>
<dbReference type="NCBIfam" id="NF006875">
    <property type="entry name" value="PRK09372.1"/>
    <property type="match status" value="1"/>
</dbReference>
<dbReference type="NCBIfam" id="NF009134">
    <property type="entry name" value="PRK12487.1"/>
    <property type="match status" value="1"/>
</dbReference>
<dbReference type="PANTHER" id="PTHR33254">
    <property type="entry name" value="4-HYDROXY-4-METHYL-2-OXOGLUTARATE ALDOLASE 3-RELATED"/>
    <property type="match status" value="1"/>
</dbReference>
<dbReference type="PANTHER" id="PTHR33254:SF4">
    <property type="entry name" value="4-HYDROXY-4-METHYL-2-OXOGLUTARATE ALDOLASE 3-RELATED"/>
    <property type="match status" value="1"/>
</dbReference>
<dbReference type="Pfam" id="PF03737">
    <property type="entry name" value="RraA-like"/>
    <property type="match status" value="1"/>
</dbReference>
<dbReference type="SUPFAM" id="SSF89562">
    <property type="entry name" value="RraA-like"/>
    <property type="match status" value="1"/>
</dbReference>
<comment type="function">
    <text evidence="1">Catalyzes the aldol cleavage of 4-hydroxy-4-methyl-2-oxoglutarate (HMG) into 2 molecules of pyruvate. Also contains a secondary oxaloacetate (OAA) decarboxylase activity due to the common pyruvate enolate transition state formed following C-C bond cleavage in the retro-aldol and decarboxylation reactions (By similarity).</text>
</comment>
<comment type="catalytic activity">
    <reaction>
        <text>4-hydroxy-4-methyl-2-oxoglutarate = 2 pyruvate</text>
        <dbReference type="Rhea" id="RHEA:22748"/>
        <dbReference type="ChEBI" id="CHEBI:15361"/>
        <dbReference type="ChEBI" id="CHEBI:58276"/>
        <dbReference type="EC" id="4.1.3.17"/>
    </reaction>
</comment>
<comment type="catalytic activity">
    <reaction>
        <text>oxaloacetate + H(+) = pyruvate + CO2</text>
        <dbReference type="Rhea" id="RHEA:15641"/>
        <dbReference type="ChEBI" id="CHEBI:15361"/>
        <dbReference type="ChEBI" id="CHEBI:15378"/>
        <dbReference type="ChEBI" id="CHEBI:16452"/>
        <dbReference type="ChEBI" id="CHEBI:16526"/>
        <dbReference type="EC" id="4.1.1.112"/>
    </reaction>
</comment>
<comment type="cofactor">
    <cofactor evidence="1">
        <name>a divalent metal cation</name>
        <dbReference type="ChEBI" id="CHEBI:60240"/>
    </cofactor>
    <text evidence="1">Divalent metal cation.</text>
</comment>
<comment type="subunit">
    <text evidence="1">Homotrimer.</text>
</comment>
<comment type="similarity">
    <text evidence="2">Belongs to the class II aldolase/RraA-like family.</text>
</comment>
<reference key="1">
    <citation type="journal article" date="2002" name="Nat. Biotechnol.">
        <title>Genome sequence of the dissimilatory metal ion-reducing bacterium Shewanella oneidensis.</title>
        <authorList>
            <person name="Heidelberg J.F."/>
            <person name="Paulsen I.T."/>
            <person name="Nelson K.E."/>
            <person name="Gaidos E.J."/>
            <person name="Nelson W.C."/>
            <person name="Read T.D."/>
            <person name="Eisen J.A."/>
            <person name="Seshadri R."/>
            <person name="Ward N.L."/>
            <person name="Methe B.A."/>
            <person name="Clayton R.A."/>
            <person name="Meyer T."/>
            <person name="Tsapin A."/>
            <person name="Scott J."/>
            <person name="Beanan M.J."/>
            <person name="Brinkac L.M."/>
            <person name="Daugherty S.C."/>
            <person name="DeBoy R.T."/>
            <person name="Dodson R.J."/>
            <person name="Durkin A.S."/>
            <person name="Haft D.H."/>
            <person name="Kolonay J.F."/>
            <person name="Madupu R."/>
            <person name="Peterson J.D."/>
            <person name="Umayam L.A."/>
            <person name="White O."/>
            <person name="Wolf A.M."/>
            <person name="Vamathevan J.J."/>
            <person name="Weidman J.F."/>
            <person name="Impraim M."/>
            <person name="Lee K."/>
            <person name="Berry K.J."/>
            <person name="Lee C."/>
            <person name="Mueller J."/>
            <person name="Khouri H.M."/>
            <person name="Gill J."/>
            <person name="Utterback T.R."/>
            <person name="McDonald L.A."/>
            <person name="Feldblyum T.V."/>
            <person name="Smith H.O."/>
            <person name="Venter J.C."/>
            <person name="Nealson K.H."/>
            <person name="Fraser C.M."/>
        </authorList>
    </citation>
    <scope>NUCLEOTIDE SEQUENCE [LARGE SCALE GENOMIC DNA]</scope>
    <source>
        <strain>ATCC 700550 / JCM 31522 / CIP 106686 / LMG 19005 / NCIMB 14063 / MR-1</strain>
    </source>
</reference>
<name>RRAAH_SHEON</name>
<gene>
    <name type="ordered locus">SO_2567</name>
</gene>
<sequence>MLDLLPDLFDHYPSKLTLLPLAFRAFGGKRLFWGEVVTVKCFEDNSKVKEVLAQPGHGKVLIVDGGGSSRRALLGDLIAQSAMDNGWQGVIINGYVRDAARLSSFNLGVYALGAMPMKTEKLDQGQINVPIELGCVTVKPGMMVYVDENGIAISEESLNFAFLN</sequence>
<evidence type="ECO:0000250" key="1"/>
<evidence type="ECO:0000305" key="2"/>